<comment type="subunit">
    <text>Heterotetramer of two type I and two type II keratins.</text>
</comment>
<comment type="miscellaneous">
    <text>There are two types of cytoskeletal and microfibrillar keratin, I (acidic) and II (neutral to basic) (40-55 and 56-70 kDa, respectively).</text>
</comment>
<comment type="similarity">
    <text evidence="1">Belongs to the intermediate filament family.</text>
</comment>
<sequence>MRSSLSRQTFSTKGGFSSNSASGGGGSRMRTSYSSVTMSRGSGGGGGVRSGSSSGGFGSRSLYNLGGKNISVSMACGASSGRALGGFGSGAYVGLGASRQTFGPVCPPGGIQEVTVNQSLLTPLNVEIDPEIQRVRTQEREQIKTLNNKFASFIDKVRFLEQQNKVLETKWALLQEQSQNTGVARSLEPFFENYLSTLRRQLDTKQSERGRLDMELRNVQDNLEDFKNKYEDEINKRTALENEFVLLKKDVDAAYMGRMDLHGKVDSLTQEIDFLQQLFEMELSQVQTNVSDTNVILSMDNNRNLDLDSIIAEVKAQYELIAQKSRAEAESWYQTKYEELQVTAGKHGDSLRDTKNEIAELTRTTQRLQGEVDAAKKQCQQLQTAIAEAEQNGEMALKDAKKKLGDLDTALHQAKEDLARMLREYQDLVSVKLALDMEIATYRKLLESEESRMSGDCPSAISISVTGNSTSVCAGGTAGFGNGLSLGGAGGASKGGFGSSVSYGAAKGGQVSGGTSILRKTTTVKTSSRRY</sequence>
<keyword id="KW-0175">Coiled coil</keyword>
<keyword id="KW-0403">Intermediate filament</keyword>
<keyword id="KW-0416">Keratin</keyword>
<keyword id="KW-1185">Reference proteome</keyword>
<organism>
    <name type="scientific">Mus musculus</name>
    <name type="common">Mouse</name>
    <dbReference type="NCBI Taxonomy" id="10090"/>
    <lineage>
        <taxon>Eukaryota</taxon>
        <taxon>Metazoa</taxon>
        <taxon>Chordata</taxon>
        <taxon>Craniata</taxon>
        <taxon>Vertebrata</taxon>
        <taxon>Euteleostomi</taxon>
        <taxon>Mammalia</taxon>
        <taxon>Eutheria</taxon>
        <taxon>Euarchontoglires</taxon>
        <taxon>Glires</taxon>
        <taxon>Rodentia</taxon>
        <taxon>Myomorpha</taxon>
        <taxon>Muroidea</taxon>
        <taxon>Muridae</taxon>
        <taxon>Murinae</taxon>
        <taxon>Mus</taxon>
        <taxon>Mus</taxon>
    </lineage>
</organism>
<reference key="1">
    <citation type="journal article" date="2004" name="Genome Res.">
        <title>The status, quality, and expansion of the NIH full-length cDNA project: the Mammalian Gene Collection (MGC).</title>
        <authorList>
            <consortium name="The MGC Project Team"/>
        </authorList>
    </citation>
    <scope>NUCLEOTIDE SEQUENCE [LARGE SCALE MRNA]</scope>
    <source>
        <strain>Czech II</strain>
        <strain>FVB/N</strain>
        <tissue>Mammary tumor</tissue>
    </source>
</reference>
<reference key="2">
    <citation type="journal article" date="2010" name="Cell">
        <title>A tissue-specific atlas of mouse protein phosphorylation and expression.</title>
        <authorList>
            <person name="Huttlin E.L."/>
            <person name="Jedrychowski M.P."/>
            <person name="Elias J.E."/>
            <person name="Goswami T."/>
            <person name="Rad R."/>
            <person name="Beausoleil S.A."/>
            <person name="Villen J."/>
            <person name="Haas W."/>
            <person name="Sowa M.E."/>
            <person name="Gygi S.P."/>
        </authorList>
    </citation>
    <scope>IDENTIFICATION BY MASS SPECTROMETRY [LARGE SCALE ANALYSIS]</scope>
    <source>
        <tissue>Brain</tissue>
        <tissue>Brown adipose tissue</tissue>
        <tissue>Heart</tissue>
        <tissue>Kidney</tissue>
        <tissue>Liver</tissue>
        <tissue>Lung</tissue>
        <tissue>Pancreas</tissue>
        <tissue>Spleen</tissue>
        <tissue>Testis</tissue>
    </source>
</reference>
<accession>Q8VED5</accession>
<accession>Q8K2E4</accession>
<evidence type="ECO:0000255" key="1">
    <source>
        <dbReference type="PROSITE-ProRule" id="PRU01188"/>
    </source>
</evidence>
<evidence type="ECO:0000256" key="2">
    <source>
        <dbReference type="SAM" id="MobiDB-lite"/>
    </source>
</evidence>
<gene>
    <name type="primary">Krt79</name>
    <name type="synonym">Kb38</name>
</gene>
<proteinExistence type="evidence at protein level"/>
<feature type="chain" id="PRO_0000314894" description="Keratin, type II cytoskeletal 79">
    <location>
        <begin position="1"/>
        <end position="531"/>
    </location>
</feature>
<feature type="domain" description="IF rod" evidence="1">
    <location>
        <begin position="139"/>
        <end position="453"/>
    </location>
</feature>
<feature type="region of interest" description="Head">
    <location>
        <begin position="1"/>
        <end position="138"/>
    </location>
</feature>
<feature type="region of interest" description="Disordered" evidence="2">
    <location>
        <begin position="1"/>
        <end position="55"/>
    </location>
</feature>
<feature type="region of interest" description="Coil 1A">
    <location>
        <begin position="139"/>
        <end position="174"/>
    </location>
</feature>
<feature type="region of interest" description="Linker 1">
    <location>
        <begin position="175"/>
        <end position="194"/>
    </location>
</feature>
<feature type="region of interest" description="Coil 1B">
    <location>
        <begin position="195"/>
        <end position="286"/>
    </location>
</feature>
<feature type="region of interest" description="Linker 12">
    <location>
        <begin position="287"/>
        <end position="310"/>
    </location>
</feature>
<feature type="region of interest" description="Coil 2">
    <location>
        <begin position="311"/>
        <end position="449"/>
    </location>
</feature>
<feature type="region of interest" description="Tail">
    <location>
        <begin position="450"/>
        <end position="531"/>
    </location>
</feature>
<feature type="compositionally biased region" description="Polar residues" evidence="2">
    <location>
        <begin position="1"/>
        <end position="12"/>
    </location>
</feature>
<feature type="compositionally biased region" description="Low complexity" evidence="2">
    <location>
        <begin position="28"/>
        <end position="40"/>
    </location>
</feature>
<feature type="compositionally biased region" description="Gly residues" evidence="2">
    <location>
        <begin position="41"/>
        <end position="55"/>
    </location>
</feature>
<feature type="site" description="Stutter">
    <location>
        <position position="391"/>
    </location>
</feature>
<name>K2C79_MOUSE</name>
<protein>
    <recommendedName>
        <fullName>Keratin, type II cytoskeletal 79</fullName>
    </recommendedName>
    <alternativeName>
        <fullName>Cytokeratin-79</fullName>
        <shortName>CK-79</shortName>
    </alternativeName>
    <alternativeName>
        <fullName>Keratin-79</fullName>
        <shortName>K79</shortName>
    </alternativeName>
    <alternativeName>
        <fullName>Type-II keratin Kb38</fullName>
    </alternativeName>
</protein>
<dbReference type="EMBL" id="BC019155">
    <property type="protein sequence ID" value="AAH19155.2"/>
    <property type="molecule type" value="mRNA"/>
</dbReference>
<dbReference type="EMBL" id="BC031593">
    <property type="protein sequence ID" value="AAH31593.1"/>
    <property type="molecule type" value="mRNA"/>
</dbReference>
<dbReference type="CCDS" id="CCDS27867.1"/>
<dbReference type="RefSeq" id="NP_666175.1">
    <property type="nucleotide sequence ID" value="NM_146063.1"/>
</dbReference>
<dbReference type="SMR" id="Q8VED5"/>
<dbReference type="BioGRID" id="230211">
    <property type="interactions" value="12"/>
</dbReference>
<dbReference type="FunCoup" id="Q8VED5">
    <property type="interactions" value="123"/>
</dbReference>
<dbReference type="IntAct" id="Q8VED5">
    <property type="interactions" value="1"/>
</dbReference>
<dbReference type="STRING" id="10090.ENSMUSP00000023799"/>
<dbReference type="GlyGen" id="Q8VED5">
    <property type="glycosylation" value="1 site, 1 O-linked glycan (1 site)"/>
</dbReference>
<dbReference type="iPTMnet" id="Q8VED5"/>
<dbReference type="PhosphoSitePlus" id="Q8VED5"/>
<dbReference type="SwissPalm" id="Q8VED5"/>
<dbReference type="CPTAC" id="non-CPTAC-3978"/>
<dbReference type="jPOST" id="Q8VED5"/>
<dbReference type="PaxDb" id="10090-ENSMUSP00000023799"/>
<dbReference type="PeptideAtlas" id="Q8VED5"/>
<dbReference type="ProteomicsDB" id="269057"/>
<dbReference type="Antibodypedia" id="26699">
    <property type="antibodies" value="110 antibodies from 15 providers"/>
</dbReference>
<dbReference type="DNASU" id="223917"/>
<dbReference type="Ensembl" id="ENSMUST00000023799.8">
    <property type="protein sequence ID" value="ENSMUSP00000023799.8"/>
    <property type="gene ID" value="ENSMUSG00000061397.9"/>
</dbReference>
<dbReference type="GeneID" id="223917"/>
<dbReference type="KEGG" id="mmu:223917"/>
<dbReference type="UCSC" id="uc007xug.1">
    <property type="organism name" value="mouse"/>
</dbReference>
<dbReference type="AGR" id="MGI:2385030"/>
<dbReference type="CTD" id="338785"/>
<dbReference type="MGI" id="MGI:2385030">
    <property type="gene designation" value="Krt79"/>
</dbReference>
<dbReference type="VEuPathDB" id="HostDB:ENSMUSG00000061397"/>
<dbReference type="eggNOG" id="ENOG502SPJX">
    <property type="taxonomic scope" value="Eukaryota"/>
</dbReference>
<dbReference type="GeneTree" id="ENSGT00940000161881"/>
<dbReference type="HOGENOM" id="CLU_012560_6_1_1"/>
<dbReference type="InParanoid" id="Q8VED5"/>
<dbReference type="OMA" id="YMGQMDL"/>
<dbReference type="OrthoDB" id="2441647at2759"/>
<dbReference type="PhylomeDB" id="Q8VED5"/>
<dbReference type="TreeFam" id="TF317854"/>
<dbReference type="Reactome" id="R-MMU-6805567">
    <property type="pathway name" value="Keratinization"/>
</dbReference>
<dbReference type="Reactome" id="R-MMU-6809371">
    <property type="pathway name" value="Formation of the cornified envelope"/>
</dbReference>
<dbReference type="BioGRID-ORCS" id="223917">
    <property type="hits" value="2 hits in 77 CRISPR screens"/>
</dbReference>
<dbReference type="PRO" id="PR:Q8VED5"/>
<dbReference type="Proteomes" id="UP000000589">
    <property type="component" value="Chromosome 15"/>
</dbReference>
<dbReference type="RNAct" id="Q8VED5">
    <property type="molecule type" value="protein"/>
</dbReference>
<dbReference type="Bgee" id="ENSMUSG00000061397">
    <property type="expression patterns" value="Expressed in lip and 65 other cell types or tissues"/>
</dbReference>
<dbReference type="GO" id="GO:0045095">
    <property type="term" value="C:keratin filament"/>
    <property type="evidence" value="ECO:0007669"/>
    <property type="project" value="InterPro"/>
</dbReference>
<dbReference type="GO" id="GO:0019899">
    <property type="term" value="F:enzyme binding"/>
    <property type="evidence" value="ECO:0007669"/>
    <property type="project" value="Ensembl"/>
</dbReference>
<dbReference type="FunFam" id="1.20.5.1160:FF:000001">
    <property type="entry name" value="Keratin type II"/>
    <property type="match status" value="1"/>
</dbReference>
<dbReference type="FunFam" id="1.20.5.170:FF:000004">
    <property type="entry name" value="Keratin, type II cytoskeletal 5"/>
    <property type="match status" value="1"/>
</dbReference>
<dbReference type="FunFam" id="1.20.5.500:FF:000001">
    <property type="entry name" value="Type II keratin 23"/>
    <property type="match status" value="1"/>
</dbReference>
<dbReference type="Gene3D" id="1.20.5.170">
    <property type="match status" value="1"/>
</dbReference>
<dbReference type="Gene3D" id="1.20.5.500">
    <property type="entry name" value="Single helix bin"/>
    <property type="match status" value="1"/>
</dbReference>
<dbReference type="Gene3D" id="1.20.5.1160">
    <property type="entry name" value="Vasodilator-stimulated phosphoprotein"/>
    <property type="match status" value="1"/>
</dbReference>
<dbReference type="InterPro" id="IPR018039">
    <property type="entry name" value="IF_conserved"/>
</dbReference>
<dbReference type="InterPro" id="IPR039008">
    <property type="entry name" value="IF_rod_dom"/>
</dbReference>
<dbReference type="InterPro" id="IPR032444">
    <property type="entry name" value="Keratin_2_head"/>
</dbReference>
<dbReference type="InterPro" id="IPR003054">
    <property type="entry name" value="Keratin_II"/>
</dbReference>
<dbReference type="PANTHER" id="PTHR45616">
    <property type="entry name" value="GATA-TYPE DOMAIN-CONTAINING PROTEIN"/>
    <property type="match status" value="1"/>
</dbReference>
<dbReference type="PANTHER" id="PTHR45616:SF10">
    <property type="entry name" value="KERATIN, TYPE II CYTOSKELETAL 79"/>
    <property type="match status" value="1"/>
</dbReference>
<dbReference type="Pfam" id="PF00038">
    <property type="entry name" value="Filament"/>
    <property type="match status" value="1"/>
</dbReference>
<dbReference type="Pfam" id="PF16208">
    <property type="entry name" value="Keratin_2_head"/>
    <property type="match status" value="2"/>
</dbReference>
<dbReference type="PRINTS" id="PR01276">
    <property type="entry name" value="TYPE2KERATIN"/>
</dbReference>
<dbReference type="SMART" id="SM01391">
    <property type="entry name" value="Filament"/>
    <property type="match status" value="1"/>
</dbReference>
<dbReference type="SUPFAM" id="SSF64593">
    <property type="entry name" value="Intermediate filament protein, coiled coil region"/>
    <property type="match status" value="3"/>
</dbReference>
<dbReference type="PROSITE" id="PS00226">
    <property type="entry name" value="IF_ROD_1"/>
    <property type="match status" value="1"/>
</dbReference>
<dbReference type="PROSITE" id="PS51842">
    <property type="entry name" value="IF_ROD_2"/>
    <property type="match status" value="1"/>
</dbReference>